<dbReference type="EMBL" id="CP001364">
    <property type="protein sequence ID" value="ACM55052.1"/>
    <property type="molecule type" value="Genomic_DNA"/>
</dbReference>
<dbReference type="SMR" id="B9LDT6"/>
<dbReference type="KEGG" id="chl:Chy400_3685"/>
<dbReference type="HOGENOM" id="CLU_108412_0_0_0"/>
<dbReference type="OrthoDB" id="9807461at2"/>
<dbReference type="GO" id="GO:0005524">
    <property type="term" value="F:ATP binding"/>
    <property type="evidence" value="ECO:0007669"/>
    <property type="project" value="UniProtKB-KW"/>
</dbReference>
<dbReference type="GO" id="GO:0003677">
    <property type="term" value="F:DNA binding"/>
    <property type="evidence" value="ECO:0007669"/>
    <property type="project" value="UniProtKB-KW"/>
</dbReference>
<dbReference type="GO" id="GO:0008270">
    <property type="term" value="F:zinc ion binding"/>
    <property type="evidence" value="ECO:0007669"/>
    <property type="project" value="UniProtKB-UniRule"/>
</dbReference>
<dbReference type="GO" id="GO:0045892">
    <property type="term" value="P:negative regulation of DNA-templated transcription"/>
    <property type="evidence" value="ECO:0007669"/>
    <property type="project" value="UniProtKB-UniRule"/>
</dbReference>
<dbReference type="HAMAP" id="MF_00440">
    <property type="entry name" value="NrdR"/>
    <property type="match status" value="1"/>
</dbReference>
<dbReference type="InterPro" id="IPR005144">
    <property type="entry name" value="ATP-cone_dom"/>
</dbReference>
<dbReference type="InterPro" id="IPR055173">
    <property type="entry name" value="NrdR-like_N"/>
</dbReference>
<dbReference type="InterPro" id="IPR003796">
    <property type="entry name" value="RNR_NrdR-like"/>
</dbReference>
<dbReference type="NCBIfam" id="TIGR00244">
    <property type="entry name" value="transcriptional regulator NrdR"/>
    <property type="match status" value="1"/>
</dbReference>
<dbReference type="PANTHER" id="PTHR30455">
    <property type="entry name" value="TRANSCRIPTIONAL REPRESSOR NRDR"/>
    <property type="match status" value="1"/>
</dbReference>
<dbReference type="PANTHER" id="PTHR30455:SF2">
    <property type="entry name" value="TRANSCRIPTIONAL REPRESSOR NRDR"/>
    <property type="match status" value="1"/>
</dbReference>
<dbReference type="Pfam" id="PF03477">
    <property type="entry name" value="ATP-cone"/>
    <property type="match status" value="1"/>
</dbReference>
<dbReference type="Pfam" id="PF22811">
    <property type="entry name" value="Zn_ribbon_NrdR"/>
    <property type="match status" value="1"/>
</dbReference>
<dbReference type="PROSITE" id="PS51161">
    <property type="entry name" value="ATP_CONE"/>
    <property type="match status" value="1"/>
</dbReference>
<protein>
    <recommendedName>
        <fullName evidence="1">Transcriptional repressor NrdR</fullName>
    </recommendedName>
</protein>
<gene>
    <name evidence="1" type="primary">nrdR</name>
    <name type="ordered locus">Chy400_3685</name>
</gene>
<organism>
    <name type="scientific">Chloroflexus aurantiacus (strain ATCC 29364 / DSM 637 / Y-400-fl)</name>
    <dbReference type="NCBI Taxonomy" id="480224"/>
    <lineage>
        <taxon>Bacteria</taxon>
        <taxon>Bacillati</taxon>
        <taxon>Chloroflexota</taxon>
        <taxon>Chloroflexia</taxon>
        <taxon>Chloroflexales</taxon>
        <taxon>Chloroflexineae</taxon>
        <taxon>Chloroflexaceae</taxon>
        <taxon>Chloroflexus</taxon>
    </lineage>
</organism>
<feature type="chain" id="PRO_1000191786" description="Transcriptional repressor NrdR">
    <location>
        <begin position="1"/>
        <end position="166"/>
    </location>
</feature>
<feature type="domain" description="ATP-cone" evidence="1">
    <location>
        <begin position="49"/>
        <end position="139"/>
    </location>
</feature>
<feature type="zinc finger region" evidence="1">
    <location>
        <begin position="3"/>
        <end position="34"/>
    </location>
</feature>
<keyword id="KW-0067">ATP-binding</keyword>
<keyword id="KW-0238">DNA-binding</keyword>
<keyword id="KW-0479">Metal-binding</keyword>
<keyword id="KW-0547">Nucleotide-binding</keyword>
<keyword id="KW-0678">Repressor</keyword>
<keyword id="KW-0804">Transcription</keyword>
<keyword id="KW-0805">Transcription regulation</keyword>
<keyword id="KW-0862">Zinc</keyword>
<keyword id="KW-0863">Zinc-finger</keyword>
<accession>B9LDT6</accession>
<evidence type="ECO:0000255" key="1">
    <source>
        <dbReference type="HAMAP-Rule" id="MF_00440"/>
    </source>
</evidence>
<proteinExistence type="inferred from homology"/>
<name>NRDR_CHLSY</name>
<reference key="1">
    <citation type="submission" date="2009-01" db="EMBL/GenBank/DDBJ databases">
        <title>Complete sequence of Chloroflexus sp. Y-400-fl.</title>
        <authorList>
            <consortium name="US DOE Joint Genome Institute"/>
            <person name="Lucas S."/>
            <person name="Copeland A."/>
            <person name="Lapidus A."/>
            <person name="Glavina del Rio T."/>
            <person name="Dalin E."/>
            <person name="Tice H."/>
            <person name="Bruce D."/>
            <person name="Goodwin L."/>
            <person name="Pitluck S."/>
            <person name="Sims D."/>
            <person name="Kiss H."/>
            <person name="Brettin T."/>
            <person name="Detter J.C."/>
            <person name="Han C."/>
            <person name="Larimer F."/>
            <person name="Land M."/>
            <person name="Hauser L."/>
            <person name="Kyrpides N."/>
            <person name="Ovchinnikova G."/>
            <person name="Bryant D.A."/>
            <person name="Richardson P."/>
        </authorList>
    </citation>
    <scope>NUCLEOTIDE SEQUENCE [LARGE SCALE GENOMIC DNA]</scope>
    <source>
        <strain>ATCC 29364 / DSM 637 / Y-400-fl</strain>
    </source>
</reference>
<comment type="function">
    <text evidence="1">Negatively regulates transcription of bacterial ribonucleotide reductase nrd genes and operons by binding to NrdR-boxes.</text>
</comment>
<comment type="cofactor">
    <cofactor evidence="1">
        <name>Zn(2+)</name>
        <dbReference type="ChEBI" id="CHEBI:29105"/>
    </cofactor>
    <text evidence="1">Binds 1 zinc ion.</text>
</comment>
<comment type="similarity">
    <text evidence="1">Belongs to the NrdR family.</text>
</comment>
<sequence length="166" mass="19172">MRCPFCHFVETDVIDTRKLYEGEVIRRRRRCRACGRRFTTYERIESVSLMVVKKDGTREPYDREKIARGVRTACYRRPVSAAAIEQLVNDVETAIMNTDEHEISSQAIGDAVMQRLRDLDEVAYIRFASVYRAFTDIGKLREAVDELLDREGVRNGHLSPKPAEDS</sequence>